<protein>
    <recommendedName>
        <fullName evidence="1">Phospho-N-acetylmuramoyl-pentapeptide-transferase</fullName>
        <ecNumber evidence="1">2.7.8.13</ecNumber>
    </recommendedName>
    <alternativeName>
        <fullName evidence="1">UDP-MurNAc-pentapeptide phosphotransferase</fullName>
    </alternativeName>
</protein>
<accession>Q9ZCW0</accession>
<reference key="1">
    <citation type="journal article" date="1998" name="Nature">
        <title>The genome sequence of Rickettsia prowazekii and the origin of mitochondria.</title>
        <authorList>
            <person name="Andersson S.G.E."/>
            <person name="Zomorodipour A."/>
            <person name="Andersson J.O."/>
            <person name="Sicheritz-Ponten T."/>
            <person name="Alsmark U.C.M."/>
            <person name="Podowski R.M."/>
            <person name="Naeslund A.K."/>
            <person name="Eriksson A.-S."/>
            <person name="Winkler H.H."/>
            <person name="Kurland C.G."/>
        </authorList>
    </citation>
    <scope>NUCLEOTIDE SEQUENCE [LARGE SCALE GENOMIC DNA]</scope>
    <source>
        <strain>Madrid E</strain>
    </source>
</reference>
<organism>
    <name type="scientific">Rickettsia prowazekii (strain Madrid E)</name>
    <dbReference type="NCBI Taxonomy" id="272947"/>
    <lineage>
        <taxon>Bacteria</taxon>
        <taxon>Pseudomonadati</taxon>
        <taxon>Pseudomonadota</taxon>
        <taxon>Alphaproteobacteria</taxon>
        <taxon>Rickettsiales</taxon>
        <taxon>Rickettsiaceae</taxon>
        <taxon>Rickettsieae</taxon>
        <taxon>Rickettsia</taxon>
        <taxon>typhus group</taxon>
    </lineage>
</organism>
<feature type="chain" id="PRO_0000108880" description="Phospho-N-acetylmuramoyl-pentapeptide-transferase">
    <location>
        <begin position="1"/>
        <end position="361"/>
    </location>
</feature>
<feature type="transmembrane region" description="Helical" evidence="1">
    <location>
        <begin position="28"/>
        <end position="48"/>
    </location>
</feature>
<feature type="transmembrane region" description="Helical" evidence="1">
    <location>
        <begin position="74"/>
        <end position="94"/>
    </location>
</feature>
<feature type="transmembrane region" description="Helical" evidence="1">
    <location>
        <begin position="99"/>
        <end position="119"/>
    </location>
</feature>
<feature type="transmembrane region" description="Helical" evidence="1">
    <location>
        <begin position="133"/>
        <end position="153"/>
    </location>
</feature>
<feature type="transmembrane region" description="Helical" evidence="1">
    <location>
        <begin position="168"/>
        <end position="188"/>
    </location>
</feature>
<feature type="transmembrane region" description="Helical" evidence="1">
    <location>
        <begin position="203"/>
        <end position="223"/>
    </location>
</feature>
<feature type="transmembrane region" description="Helical" evidence="1">
    <location>
        <begin position="236"/>
        <end position="256"/>
    </location>
</feature>
<feature type="transmembrane region" description="Helical" evidence="1">
    <location>
        <begin position="263"/>
        <end position="283"/>
    </location>
</feature>
<feature type="transmembrane region" description="Helical" evidence="1">
    <location>
        <begin position="288"/>
        <end position="308"/>
    </location>
</feature>
<feature type="transmembrane region" description="Helical" evidence="1">
    <location>
        <begin position="338"/>
        <end position="358"/>
    </location>
</feature>
<evidence type="ECO:0000255" key="1">
    <source>
        <dbReference type="HAMAP-Rule" id="MF_00038"/>
    </source>
</evidence>
<comment type="function">
    <text evidence="1">Catalyzes the initial step of the lipid cycle reactions in the biosynthesis of the cell wall peptidoglycan: transfers peptidoglycan precursor phospho-MurNAc-pentapeptide from UDP-MurNAc-pentapeptide onto the lipid carrier undecaprenyl phosphate, yielding undecaprenyl-pyrophosphoryl-MurNAc-pentapeptide, known as lipid I.</text>
</comment>
<comment type="catalytic activity">
    <reaction evidence="1">
        <text>UDP-N-acetyl-alpha-D-muramoyl-L-alanyl-gamma-D-glutamyl-meso-2,6-diaminopimeloyl-D-alanyl-D-alanine + di-trans,octa-cis-undecaprenyl phosphate = di-trans,octa-cis-undecaprenyl diphospho-N-acetyl-alpha-D-muramoyl-L-alanyl-D-glutamyl-meso-2,6-diaminopimeloyl-D-alanyl-D-alanine + UMP</text>
        <dbReference type="Rhea" id="RHEA:28386"/>
        <dbReference type="ChEBI" id="CHEBI:57865"/>
        <dbReference type="ChEBI" id="CHEBI:60392"/>
        <dbReference type="ChEBI" id="CHEBI:61386"/>
        <dbReference type="ChEBI" id="CHEBI:61387"/>
        <dbReference type="EC" id="2.7.8.13"/>
    </reaction>
</comment>
<comment type="cofactor">
    <cofactor evidence="1">
        <name>Mg(2+)</name>
        <dbReference type="ChEBI" id="CHEBI:18420"/>
    </cofactor>
</comment>
<comment type="pathway">
    <text evidence="1">Cell wall biogenesis; peptidoglycan biosynthesis.</text>
</comment>
<comment type="subcellular location">
    <subcellularLocation>
        <location evidence="1">Cell inner membrane</location>
        <topology evidence="1">Multi-pass membrane protein</topology>
    </subcellularLocation>
</comment>
<comment type="similarity">
    <text evidence="1">Belongs to the glycosyltransferase 4 family. MraY subfamily.</text>
</comment>
<sequence length="361" mass="40033">MLYNLLLPHIHNSHIANLFHYITFRSGLAIIITLSISFVTGPILIKFLRSLQKYGQPIRSDGPESHKTKAGTPTMGGIMIILSSCLSTLLLADLTNKYIWITLFGFISFGIIGFMDDYAKVKRNNHYGVRGKSKFLLQGIISLIIYVLLEYLDKNFSHLLNVPFFKNLSLDLNYFYMVFAIFVIVGSSNAVNLTDGLDGLATVPIAFTAGSFALISYLVGNLIYANYLQLTYIPNTGELTVLCAGLVGSCLGFLWFNAQPAEVFMGDTGSLSLGGVLGIISVITKHEIVLAIIGGLFVIETTSVILQVYYFKATKGKRIFKMAPLHHHFEKHGWAESKVVIRFWIISVIFSLIGLSSLKLR</sequence>
<dbReference type="EC" id="2.7.8.13" evidence="1"/>
<dbReference type="EMBL" id="AJ235272">
    <property type="protein sequence ID" value="CAA15039.1"/>
    <property type="molecule type" value="Genomic_DNA"/>
</dbReference>
<dbReference type="PIR" id="E71664">
    <property type="entry name" value="E71664"/>
</dbReference>
<dbReference type="RefSeq" id="NP_220963.1">
    <property type="nucleotide sequence ID" value="NC_000963.1"/>
</dbReference>
<dbReference type="RefSeq" id="WP_004597928.1">
    <property type="nucleotide sequence ID" value="NC_000963.1"/>
</dbReference>
<dbReference type="SMR" id="Q9ZCW0"/>
<dbReference type="STRING" id="272947.gene:17555674"/>
<dbReference type="EnsemblBacteria" id="CAA15039">
    <property type="protein sequence ID" value="CAA15039"/>
    <property type="gene ID" value="CAA15039"/>
</dbReference>
<dbReference type="GeneID" id="57569720"/>
<dbReference type="KEGG" id="rpr:RP595"/>
<dbReference type="PATRIC" id="fig|272947.5.peg.613"/>
<dbReference type="eggNOG" id="COG0472">
    <property type="taxonomic scope" value="Bacteria"/>
</dbReference>
<dbReference type="HOGENOM" id="CLU_023982_0_0_5"/>
<dbReference type="OrthoDB" id="9805475at2"/>
<dbReference type="UniPathway" id="UPA00219"/>
<dbReference type="Proteomes" id="UP000002480">
    <property type="component" value="Chromosome"/>
</dbReference>
<dbReference type="GO" id="GO:0005886">
    <property type="term" value="C:plasma membrane"/>
    <property type="evidence" value="ECO:0007669"/>
    <property type="project" value="UniProtKB-SubCell"/>
</dbReference>
<dbReference type="GO" id="GO:0046872">
    <property type="term" value="F:metal ion binding"/>
    <property type="evidence" value="ECO:0007669"/>
    <property type="project" value="UniProtKB-KW"/>
</dbReference>
<dbReference type="GO" id="GO:0008963">
    <property type="term" value="F:phospho-N-acetylmuramoyl-pentapeptide-transferase activity"/>
    <property type="evidence" value="ECO:0007669"/>
    <property type="project" value="UniProtKB-UniRule"/>
</dbReference>
<dbReference type="GO" id="GO:0051992">
    <property type="term" value="F:UDP-N-acetylmuramoyl-L-alanyl-D-glutamyl-meso-2,6-diaminopimelyl-D-alanyl-D-alanine:undecaprenyl-phosphate transferase activity"/>
    <property type="evidence" value="ECO:0007669"/>
    <property type="project" value="RHEA"/>
</dbReference>
<dbReference type="GO" id="GO:0051301">
    <property type="term" value="P:cell division"/>
    <property type="evidence" value="ECO:0007669"/>
    <property type="project" value="UniProtKB-KW"/>
</dbReference>
<dbReference type="GO" id="GO:0071555">
    <property type="term" value="P:cell wall organization"/>
    <property type="evidence" value="ECO:0007669"/>
    <property type="project" value="UniProtKB-KW"/>
</dbReference>
<dbReference type="GO" id="GO:0009252">
    <property type="term" value="P:peptidoglycan biosynthetic process"/>
    <property type="evidence" value="ECO:0007669"/>
    <property type="project" value="UniProtKB-UniRule"/>
</dbReference>
<dbReference type="GO" id="GO:0008360">
    <property type="term" value="P:regulation of cell shape"/>
    <property type="evidence" value="ECO:0007669"/>
    <property type="project" value="UniProtKB-KW"/>
</dbReference>
<dbReference type="CDD" id="cd06852">
    <property type="entry name" value="GT_MraY"/>
    <property type="match status" value="1"/>
</dbReference>
<dbReference type="HAMAP" id="MF_00038">
    <property type="entry name" value="MraY"/>
    <property type="match status" value="1"/>
</dbReference>
<dbReference type="InterPro" id="IPR000715">
    <property type="entry name" value="Glycosyl_transferase_4"/>
</dbReference>
<dbReference type="InterPro" id="IPR003524">
    <property type="entry name" value="PNAcMuramoyl-5peptid_Trfase"/>
</dbReference>
<dbReference type="InterPro" id="IPR018480">
    <property type="entry name" value="PNAcMuramoyl-5peptid_Trfase_CS"/>
</dbReference>
<dbReference type="NCBIfam" id="TIGR00445">
    <property type="entry name" value="mraY"/>
    <property type="match status" value="1"/>
</dbReference>
<dbReference type="PANTHER" id="PTHR22926">
    <property type="entry name" value="PHOSPHO-N-ACETYLMURAMOYL-PENTAPEPTIDE-TRANSFERASE"/>
    <property type="match status" value="1"/>
</dbReference>
<dbReference type="PANTHER" id="PTHR22926:SF5">
    <property type="entry name" value="PHOSPHO-N-ACETYLMURAMOYL-PENTAPEPTIDE-TRANSFERASE HOMOLOG"/>
    <property type="match status" value="1"/>
</dbReference>
<dbReference type="Pfam" id="PF00953">
    <property type="entry name" value="Glycos_transf_4"/>
    <property type="match status" value="1"/>
</dbReference>
<dbReference type="Pfam" id="PF10555">
    <property type="entry name" value="MraY_sig1"/>
    <property type="match status" value="1"/>
</dbReference>
<dbReference type="PROSITE" id="PS01347">
    <property type="entry name" value="MRAY_1"/>
    <property type="match status" value="1"/>
</dbReference>
<dbReference type="PROSITE" id="PS01348">
    <property type="entry name" value="MRAY_2"/>
    <property type="match status" value="1"/>
</dbReference>
<keyword id="KW-0131">Cell cycle</keyword>
<keyword id="KW-0132">Cell division</keyword>
<keyword id="KW-0997">Cell inner membrane</keyword>
<keyword id="KW-1003">Cell membrane</keyword>
<keyword id="KW-0133">Cell shape</keyword>
<keyword id="KW-0961">Cell wall biogenesis/degradation</keyword>
<keyword id="KW-0460">Magnesium</keyword>
<keyword id="KW-0472">Membrane</keyword>
<keyword id="KW-0479">Metal-binding</keyword>
<keyword id="KW-0573">Peptidoglycan synthesis</keyword>
<keyword id="KW-1185">Reference proteome</keyword>
<keyword id="KW-0808">Transferase</keyword>
<keyword id="KW-0812">Transmembrane</keyword>
<keyword id="KW-1133">Transmembrane helix</keyword>
<name>MRAY_RICPR</name>
<gene>
    <name evidence="1" type="primary">mraY</name>
    <name type="ordered locus">RP595</name>
</gene>
<proteinExistence type="inferred from homology"/>